<reference key="1">
    <citation type="submission" date="1998-11" db="EMBL/GenBank/DDBJ databases">
        <title>Candida albicans strain 1161 genome pilot sequencing project.</title>
        <authorList>
            <person name="Oliver K."/>
            <person name="Harris D."/>
            <person name="Barrell B.G."/>
            <person name="Rajandream M.A."/>
        </authorList>
    </citation>
    <scope>NUCLEOTIDE SEQUENCE [LARGE SCALE GENOMIC DNA]</scope>
    <source>
        <strain>1161</strain>
    </source>
</reference>
<reference key="2">
    <citation type="journal article" date="2004" name="Proc. Natl. Acad. Sci. U.S.A.">
        <title>The diploid genome sequence of Candida albicans.</title>
        <authorList>
            <person name="Jones T."/>
            <person name="Federspiel N.A."/>
            <person name="Chibana H."/>
            <person name="Dungan J."/>
            <person name="Kalman S."/>
            <person name="Magee B.B."/>
            <person name="Newport G."/>
            <person name="Thorstenson Y.R."/>
            <person name="Agabian N."/>
            <person name="Magee P.T."/>
            <person name="Davis R.W."/>
            <person name="Scherer S."/>
        </authorList>
    </citation>
    <scope>NUCLEOTIDE SEQUENCE [LARGE SCALE GENOMIC DNA]</scope>
    <source>
        <strain>SC5314 / ATCC MYA-2876</strain>
    </source>
</reference>
<reference key="3">
    <citation type="journal article" date="2007" name="Genome Biol.">
        <title>Assembly of the Candida albicans genome into sixteen supercontigs aligned on the eight chromosomes.</title>
        <authorList>
            <person name="van het Hoog M."/>
            <person name="Rast T.J."/>
            <person name="Martchenko M."/>
            <person name="Grindle S."/>
            <person name="Dignard D."/>
            <person name="Hogues H."/>
            <person name="Cuomo C."/>
            <person name="Berriman M."/>
            <person name="Scherer S."/>
            <person name="Magee B.B."/>
            <person name="Whiteway M."/>
            <person name="Chibana H."/>
            <person name="Nantel A."/>
            <person name="Magee P.T."/>
        </authorList>
    </citation>
    <scope>GENOME REANNOTATION</scope>
    <source>
        <strain>SC5314 / ATCC MYA-2876</strain>
    </source>
</reference>
<reference key="4">
    <citation type="journal article" date="2013" name="Genome Biol.">
        <title>Assembly of a phased diploid Candida albicans genome facilitates allele-specific measurements and provides a simple model for repeat and indel structure.</title>
        <authorList>
            <person name="Muzzey D."/>
            <person name="Schwartz K."/>
            <person name="Weissman J.S."/>
            <person name="Sherlock G."/>
        </authorList>
    </citation>
    <scope>NUCLEOTIDE SEQUENCE [LARGE SCALE GENOMIC DNA]</scope>
    <scope>GENOME REANNOTATION</scope>
    <source>
        <strain>SC5314 / ATCC MYA-2876</strain>
    </source>
</reference>
<reference key="5">
    <citation type="journal article" date="2005" name="J. Antimicrob. Chemother.">
        <title>Exposure of Candida albicans to antifungal agents affects expression of SAP2 and SAP9 secreted proteinase genes.</title>
        <authorList>
            <person name="Copping V.M.S."/>
            <person name="Barelle C.J."/>
            <person name="Hube B."/>
            <person name="Gow N.A.R."/>
            <person name="Brown A.J.P."/>
            <person name="Odds F.C."/>
        </authorList>
    </citation>
    <scope>INDUCTION BY FLUCONAZOLE</scope>
</reference>
<protein>
    <recommendedName>
        <fullName>Protein SDS23</fullName>
    </recommendedName>
</protein>
<dbReference type="EMBL" id="AL033501">
    <property type="protein sequence ID" value="CAA21985.1"/>
    <property type="molecule type" value="Genomic_DNA"/>
</dbReference>
<dbReference type="EMBL" id="CP017623">
    <property type="protein sequence ID" value="AOW26475.1"/>
    <property type="molecule type" value="Genomic_DNA"/>
</dbReference>
<dbReference type="RefSeq" id="XP_717654.2">
    <property type="nucleotide sequence ID" value="XM_712561.2"/>
</dbReference>
<dbReference type="SMR" id="Q5A744"/>
<dbReference type="BioGRID" id="1223850">
    <property type="interactions" value="1"/>
</dbReference>
<dbReference type="FunCoup" id="Q5A744">
    <property type="interactions" value="263"/>
</dbReference>
<dbReference type="STRING" id="237561.Q5A744"/>
<dbReference type="EnsemblFungi" id="C1_08370W_A-T">
    <property type="protein sequence ID" value="C1_08370W_A-T-p1"/>
    <property type="gene ID" value="C1_08370W_A"/>
</dbReference>
<dbReference type="GeneID" id="3640756"/>
<dbReference type="KEGG" id="cal:CAALFM_C108370WA"/>
<dbReference type="CGD" id="CAL0000184899">
    <property type="gene designation" value="SDS24"/>
</dbReference>
<dbReference type="VEuPathDB" id="FungiDB:C1_08370W_A"/>
<dbReference type="eggNOG" id="KOG1764">
    <property type="taxonomic scope" value="Eukaryota"/>
</dbReference>
<dbReference type="HOGENOM" id="CLU_024459_1_0_1"/>
<dbReference type="InParanoid" id="Q5A744"/>
<dbReference type="OrthoDB" id="449052at2759"/>
<dbReference type="PRO" id="PR:Q5A744"/>
<dbReference type="Proteomes" id="UP000000559">
    <property type="component" value="Chromosome 1"/>
</dbReference>
<dbReference type="GO" id="GO:0005737">
    <property type="term" value="C:cytoplasm"/>
    <property type="evidence" value="ECO:0007669"/>
    <property type="project" value="UniProtKB-SubCell"/>
</dbReference>
<dbReference type="GO" id="GO:0005634">
    <property type="term" value="C:nucleus"/>
    <property type="evidence" value="ECO:0007669"/>
    <property type="project" value="UniProtKB-SubCell"/>
</dbReference>
<dbReference type="GO" id="GO:0004865">
    <property type="term" value="F:protein serine/threonine phosphatase inhibitor activity"/>
    <property type="evidence" value="ECO:0000318"/>
    <property type="project" value="GO_Central"/>
</dbReference>
<dbReference type="GO" id="GO:0042149">
    <property type="term" value="P:cellular response to glucose starvation"/>
    <property type="evidence" value="ECO:0000318"/>
    <property type="project" value="GO_Central"/>
</dbReference>
<dbReference type="GO" id="GO:0030071">
    <property type="term" value="P:regulation of mitotic metaphase/anaphase transition"/>
    <property type="evidence" value="ECO:0007669"/>
    <property type="project" value="InterPro"/>
</dbReference>
<dbReference type="CDD" id="cd02205">
    <property type="entry name" value="CBS_pair_SF"/>
    <property type="match status" value="1"/>
</dbReference>
<dbReference type="Gene3D" id="3.10.580.10">
    <property type="entry name" value="CBS-domain"/>
    <property type="match status" value="2"/>
</dbReference>
<dbReference type="InterPro" id="IPR050511">
    <property type="entry name" value="AMPK_gamma/SDS23_families"/>
</dbReference>
<dbReference type="InterPro" id="IPR000644">
    <property type="entry name" value="CBS_dom"/>
</dbReference>
<dbReference type="InterPro" id="IPR046342">
    <property type="entry name" value="CBS_dom_sf"/>
</dbReference>
<dbReference type="InterPro" id="IPR016711">
    <property type="entry name" value="Ssd23"/>
</dbReference>
<dbReference type="PANTHER" id="PTHR13780">
    <property type="entry name" value="AMP-ACTIVATED PROTEIN KINASE, GAMMA REGULATORY SUBUNIT"/>
    <property type="match status" value="1"/>
</dbReference>
<dbReference type="PANTHER" id="PTHR13780:SF36">
    <property type="entry name" value="CBS DOMAIN-CONTAINING PROTEIN"/>
    <property type="match status" value="1"/>
</dbReference>
<dbReference type="Pfam" id="PF00571">
    <property type="entry name" value="CBS"/>
    <property type="match status" value="2"/>
</dbReference>
<dbReference type="PIRSF" id="PIRSF018148">
    <property type="entry name" value="UCP018148_CBS_YBR214w"/>
    <property type="match status" value="1"/>
</dbReference>
<dbReference type="SMART" id="SM00116">
    <property type="entry name" value="CBS"/>
    <property type="match status" value="2"/>
</dbReference>
<dbReference type="SUPFAM" id="SSF54631">
    <property type="entry name" value="CBS-domain pair"/>
    <property type="match status" value="2"/>
</dbReference>
<dbReference type="PROSITE" id="PS51371">
    <property type="entry name" value="CBS"/>
    <property type="match status" value="2"/>
</dbReference>
<gene>
    <name type="primary">SDS24</name>
    <name type="synonym">SDS23</name>
    <name type="ordered locus">CAALFM_C108370WA</name>
    <name type="ORF">Ca41C10.01c</name>
    <name type="ORF">CaO19.12584</name>
    <name type="ORF">CaO19.5118</name>
</gene>
<sequence length="628" mass="67545">MVNPPQPRQMPKSPRLSTSTSSGPSAVPNLLGSPRPSPPQLQHQPSSASTSSTTSTATTGGSISATAPGSTQHYLHHHPSRKTSIVEILSSPPPLPTDPNDPIHQLSLSRHASTSSNKSSSQSIAPGSTAITNHAFSLVDWSEIPLTELTESNKLISIHSSHSVQSAFETLLKNNLTSVPVSISKSDPHDLTNCLTFDYSDLNTYLLLIMNKINYSELNVDDIGDPNISPQERHEFVTQTISKAKRGEEVPVEFIIKLHPKNPFIKFNETDTLFSVMETLGNGVHRIAITNEEGNKITGILSQRRLIKYMWENARRFPSLDFYLTSTLQDLKIGSSNPITIYEDQMLIEALHKMFNERVSSLAVIDRSRTLIGNISIVDVKNVTSSKNSHLLFKSVLNFISYNLSQKGIEEGQDQFPIFHVNNQTSLGRVIAKLVATQSHRLWIVDSSRQASSMSSASASAPNSGMNNGVTVGYPAPADSSITDKAEEVEASSMSSPQLNAAAAAAAAVATGAPTTATSAQPDFSYTSGTGKLVGVVTLTDILGLFATSKGRRTDPQAARNQRRRSSTSTTRSSIDSALSAEGILPSGSAIIGSSNAANTGRRGSVEVSSDVFRKSYTKAQENAFSKE</sequence>
<feature type="chain" id="PRO_0000324949" description="Protein SDS23">
    <location>
        <begin position="1"/>
        <end position="628"/>
    </location>
</feature>
<feature type="domain" description="CBS 1" evidence="2">
    <location>
        <begin position="258"/>
        <end position="319"/>
    </location>
</feature>
<feature type="domain" description="CBS 2" evidence="2">
    <location>
        <begin position="334"/>
        <end position="392"/>
    </location>
</feature>
<feature type="region of interest" description="Disordered" evidence="3">
    <location>
        <begin position="1"/>
        <end position="126"/>
    </location>
</feature>
<feature type="region of interest" description="Disordered" evidence="3">
    <location>
        <begin position="551"/>
        <end position="609"/>
    </location>
</feature>
<feature type="compositionally biased region" description="Polar residues" evidence="3">
    <location>
        <begin position="15"/>
        <end position="24"/>
    </location>
</feature>
<feature type="compositionally biased region" description="Low complexity" evidence="3">
    <location>
        <begin position="40"/>
        <end position="71"/>
    </location>
</feature>
<feature type="compositionally biased region" description="Low complexity" evidence="3">
    <location>
        <begin position="109"/>
        <end position="123"/>
    </location>
</feature>
<feature type="compositionally biased region" description="Low complexity" evidence="3">
    <location>
        <begin position="587"/>
        <end position="599"/>
    </location>
</feature>
<feature type="sequence conflict" description="In Ref. 1; CAA21985." evidence="5" ref="1">
    <original>N</original>
    <variation>Y</variation>
    <location>
        <position position="174"/>
    </location>
</feature>
<feature type="sequence conflict" description="In Ref. 1; CAA21985." evidence="5" ref="1">
    <original>A</original>
    <variation>AA</variation>
    <location>
        <position position="508"/>
    </location>
</feature>
<name>SDS24_CANAL</name>
<organism>
    <name type="scientific">Candida albicans (strain SC5314 / ATCC MYA-2876)</name>
    <name type="common">Yeast</name>
    <dbReference type="NCBI Taxonomy" id="237561"/>
    <lineage>
        <taxon>Eukaryota</taxon>
        <taxon>Fungi</taxon>
        <taxon>Dikarya</taxon>
        <taxon>Ascomycota</taxon>
        <taxon>Saccharomycotina</taxon>
        <taxon>Pichiomycetes</taxon>
        <taxon>Debaryomycetaceae</taxon>
        <taxon>Candida/Lodderomyces clade</taxon>
        <taxon>Candida</taxon>
    </lineage>
</organism>
<accession>Q5A744</accession>
<accession>A0A1D8PEA1</accession>
<accession>O94035</accession>
<proteinExistence type="evidence at transcript level"/>
<evidence type="ECO:0000250" key="1"/>
<evidence type="ECO:0000255" key="2">
    <source>
        <dbReference type="PROSITE-ProRule" id="PRU00703"/>
    </source>
</evidence>
<evidence type="ECO:0000256" key="3">
    <source>
        <dbReference type="SAM" id="MobiDB-lite"/>
    </source>
</evidence>
<evidence type="ECO:0000269" key="4">
    <source>
    </source>
</evidence>
<evidence type="ECO:0000305" key="5"/>
<comment type="function">
    <text evidence="1">Involved in DNA replication and cell separation.</text>
</comment>
<comment type="subcellular location">
    <subcellularLocation>
        <location evidence="1">Cytoplasm</location>
    </subcellularLocation>
    <subcellularLocation>
        <location evidence="1">Nucleus</location>
    </subcellularLocation>
</comment>
<comment type="induction">
    <text evidence="4">By the antifungal drug fluconazole.</text>
</comment>
<comment type="similarity">
    <text evidence="5">Belongs to the SDS23 family.</text>
</comment>
<keyword id="KW-0129">CBS domain</keyword>
<keyword id="KW-0963">Cytoplasm</keyword>
<keyword id="KW-0539">Nucleus</keyword>
<keyword id="KW-1185">Reference proteome</keyword>
<keyword id="KW-0677">Repeat</keyword>